<dbReference type="EC" id="2.1.1.174" evidence="1"/>
<dbReference type="EMBL" id="CP000821">
    <property type="protein sequence ID" value="ABV38040.1"/>
    <property type="molecule type" value="Genomic_DNA"/>
</dbReference>
<dbReference type="RefSeq" id="WP_012143770.1">
    <property type="nucleotide sequence ID" value="NC_009831.1"/>
</dbReference>
<dbReference type="SMR" id="A8FYW7"/>
<dbReference type="STRING" id="425104.Ssed_3436"/>
<dbReference type="KEGG" id="sse:Ssed_3436"/>
<dbReference type="eggNOG" id="COG2813">
    <property type="taxonomic scope" value="Bacteria"/>
</dbReference>
<dbReference type="HOGENOM" id="CLU_040288_4_0_6"/>
<dbReference type="OrthoDB" id="29650at2"/>
<dbReference type="Proteomes" id="UP000002015">
    <property type="component" value="Chromosome"/>
</dbReference>
<dbReference type="GO" id="GO:0005737">
    <property type="term" value="C:cytoplasm"/>
    <property type="evidence" value="ECO:0007669"/>
    <property type="project" value="UniProtKB-SubCell"/>
</dbReference>
<dbReference type="GO" id="GO:0052916">
    <property type="term" value="F:23S rRNA (guanine(1835)-N(2))-methyltransferase activity"/>
    <property type="evidence" value="ECO:0007669"/>
    <property type="project" value="UniProtKB-EC"/>
</dbReference>
<dbReference type="GO" id="GO:0003676">
    <property type="term" value="F:nucleic acid binding"/>
    <property type="evidence" value="ECO:0007669"/>
    <property type="project" value="InterPro"/>
</dbReference>
<dbReference type="CDD" id="cd02440">
    <property type="entry name" value="AdoMet_MTases"/>
    <property type="match status" value="1"/>
</dbReference>
<dbReference type="Gene3D" id="3.40.50.150">
    <property type="entry name" value="Vaccinia Virus protein VP39"/>
    <property type="match status" value="2"/>
</dbReference>
<dbReference type="HAMAP" id="MF_01859">
    <property type="entry name" value="23SrRNA_methyltr_G"/>
    <property type="match status" value="1"/>
</dbReference>
<dbReference type="InterPro" id="IPR002052">
    <property type="entry name" value="DNA_methylase_N6_adenine_CS"/>
</dbReference>
<dbReference type="InterPro" id="IPR017237">
    <property type="entry name" value="rRNA_m2G-MeTrfase_RlmG"/>
</dbReference>
<dbReference type="InterPro" id="IPR046977">
    <property type="entry name" value="RsmC/RlmG"/>
</dbReference>
<dbReference type="InterPro" id="IPR029063">
    <property type="entry name" value="SAM-dependent_MTases_sf"/>
</dbReference>
<dbReference type="InterPro" id="IPR007848">
    <property type="entry name" value="Small_mtfrase_dom"/>
</dbReference>
<dbReference type="PANTHER" id="PTHR47816:SF5">
    <property type="entry name" value="RIBOSOMAL RNA LARGE SUBUNIT METHYLTRANSFERASE G"/>
    <property type="match status" value="1"/>
</dbReference>
<dbReference type="PANTHER" id="PTHR47816">
    <property type="entry name" value="RIBOSOMAL RNA SMALL SUBUNIT METHYLTRANSFERASE C"/>
    <property type="match status" value="1"/>
</dbReference>
<dbReference type="Pfam" id="PF05175">
    <property type="entry name" value="MTS"/>
    <property type="match status" value="1"/>
</dbReference>
<dbReference type="PIRSF" id="PIRSF037565">
    <property type="entry name" value="RRNA_m2G_Mtase_RsmD_prd"/>
    <property type="match status" value="1"/>
</dbReference>
<dbReference type="SUPFAM" id="SSF53335">
    <property type="entry name" value="S-adenosyl-L-methionine-dependent methyltransferases"/>
    <property type="match status" value="1"/>
</dbReference>
<reference key="1">
    <citation type="submission" date="2007-08" db="EMBL/GenBank/DDBJ databases">
        <title>Complete sequence of Shewanella sediminis HAW-EB3.</title>
        <authorList>
            <consortium name="US DOE Joint Genome Institute"/>
            <person name="Copeland A."/>
            <person name="Lucas S."/>
            <person name="Lapidus A."/>
            <person name="Barry K."/>
            <person name="Glavina del Rio T."/>
            <person name="Dalin E."/>
            <person name="Tice H."/>
            <person name="Pitluck S."/>
            <person name="Chertkov O."/>
            <person name="Brettin T."/>
            <person name="Bruce D."/>
            <person name="Detter J.C."/>
            <person name="Han C."/>
            <person name="Schmutz J."/>
            <person name="Larimer F."/>
            <person name="Land M."/>
            <person name="Hauser L."/>
            <person name="Kyrpides N."/>
            <person name="Kim E."/>
            <person name="Zhao J.-S."/>
            <person name="Richardson P."/>
        </authorList>
    </citation>
    <scope>NUCLEOTIDE SEQUENCE [LARGE SCALE GENOMIC DNA]</scope>
    <source>
        <strain>HAW-EB3</strain>
    </source>
</reference>
<comment type="function">
    <text evidence="1">Specifically methylates the guanine in position 1835 (m2G1835) of 23S rRNA.</text>
</comment>
<comment type="catalytic activity">
    <reaction evidence="1">
        <text>guanosine(1835) in 23S rRNA + S-adenosyl-L-methionine = N(2)-methylguanosine(1835) in 23S rRNA + S-adenosyl-L-homocysteine + H(+)</text>
        <dbReference type="Rhea" id="RHEA:42744"/>
        <dbReference type="Rhea" id="RHEA-COMP:10217"/>
        <dbReference type="Rhea" id="RHEA-COMP:10218"/>
        <dbReference type="ChEBI" id="CHEBI:15378"/>
        <dbReference type="ChEBI" id="CHEBI:57856"/>
        <dbReference type="ChEBI" id="CHEBI:59789"/>
        <dbReference type="ChEBI" id="CHEBI:74269"/>
        <dbReference type="ChEBI" id="CHEBI:74481"/>
        <dbReference type="EC" id="2.1.1.174"/>
    </reaction>
</comment>
<comment type="subcellular location">
    <subcellularLocation>
        <location evidence="1">Cytoplasm</location>
    </subcellularLocation>
</comment>
<comment type="similarity">
    <text evidence="1">Belongs to the methyltransferase superfamily. RlmG family.</text>
</comment>
<proteinExistence type="inferred from homology"/>
<feature type="chain" id="PRO_0000366515" description="Ribosomal RNA large subunit methyltransferase G">
    <location>
        <begin position="1"/>
        <end position="412"/>
    </location>
</feature>
<feature type="region of interest" description="Disordered" evidence="2">
    <location>
        <begin position="386"/>
        <end position="412"/>
    </location>
</feature>
<feature type="compositionally biased region" description="Polar residues" evidence="2">
    <location>
        <begin position="394"/>
        <end position="406"/>
    </location>
</feature>
<evidence type="ECO:0000255" key="1">
    <source>
        <dbReference type="HAMAP-Rule" id="MF_01859"/>
    </source>
</evidence>
<evidence type="ECO:0000256" key="2">
    <source>
        <dbReference type="SAM" id="MobiDB-lite"/>
    </source>
</evidence>
<protein>
    <recommendedName>
        <fullName evidence="1">Ribosomal RNA large subunit methyltransferase G</fullName>
        <ecNumber evidence="1">2.1.1.174</ecNumber>
    </recommendedName>
    <alternativeName>
        <fullName evidence="1">23S rRNA m2G1835 methyltransferase</fullName>
    </alternativeName>
    <alternativeName>
        <fullName evidence="1">rRNA (guanine-N(2)-)-methyltransferase RlmG</fullName>
    </alternativeName>
</protein>
<accession>A8FYW7</accession>
<keyword id="KW-0963">Cytoplasm</keyword>
<keyword id="KW-0489">Methyltransferase</keyword>
<keyword id="KW-1185">Reference proteome</keyword>
<keyword id="KW-0698">rRNA processing</keyword>
<keyword id="KW-0949">S-adenosyl-L-methionine</keyword>
<keyword id="KW-0808">Transferase</keyword>
<organism>
    <name type="scientific">Shewanella sediminis (strain HAW-EB3)</name>
    <dbReference type="NCBI Taxonomy" id="425104"/>
    <lineage>
        <taxon>Bacteria</taxon>
        <taxon>Pseudomonadati</taxon>
        <taxon>Pseudomonadota</taxon>
        <taxon>Gammaproteobacteria</taxon>
        <taxon>Alteromonadales</taxon>
        <taxon>Shewanellaceae</taxon>
        <taxon>Shewanella</taxon>
    </lineage>
</organism>
<gene>
    <name evidence="1" type="primary">rlmG</name>
    <name type="ordered locus">Ssed_3436</name>
</gene>
<name>RLMG_SHESH</name>
<sequence length="412" mass="45544">MTTQFSVEGIELELTRYPKNQESNLQAWDAADEHLIKHLKETEQVPVATAIINDNFGALTACLRSMESQWPLAVETDAKTSQLGTVQNLENNTLSSDNIQWLNSRENIPGAIELVLMKLPKNLSYFAHQLNRLSQVLPEGTQVLIGAKAKSINKSLLELFAKNLGPASASLTWKKTRVITCTADGKVRALPTESQWSIPDLNLNITNLSNVFASGKLDIGARIMLDNMPKGDFKSIIDLGCGNGVLGLNAKQLFPQAYIHFVDDSEMAVESARQNWALNKLDTLGLVGEQATFGWDDCLTHLNEGIRPELILCNPPFHQGEAITDHIAWQMFLQSWRALKNGGILHVVGNRHLAYHVKLQRIFKNCTTVASNGKFVILQAQKISKKAEPHENGESSSDTPNPQSSLYGGVKR</sequence>